<proteinExistence type="inferred from homology"/>
<evidence type="ECO:0000255" key="1">
    <source>
        <dbReference type="HAMAP-Rule" id="MF_01363"/>
    </source>
</evidence>
<evidence type="ECO:0000305" key="2"/>
<feature type="chain" id="PRO_0000269391" description="Large ribosomal subunit protein bL21">
    <location>
        <begin position="1"/>
        <end position="104"/>
    </location>
</feature>
<protein>
    <recommendedName>
        <fullName evidence="1">Large ribosomal subunit protein bL21</fullName>
    </recommendedName>
    <alternativeName>
        <fullName evidence="2">50S ribosomal protein L21</fullName>
    </alternativeName>
</protein>
<accession>Q97QU4</accession>
<sequence length="104" mass="11197">MSTYAIIKTGGKQVKVEVGQAVYVEKLNVEAGQEVTFNEVVLVGGENTVVGTPLVAGATVVGTVEKQGKQKKVVTYKYKPKKGSHRKQGHRQPYTKVVINAINA</sequence>
<keyword id="KW-1185">Reference proteome</keyword>
<keyword id="KW-0687">Ribonucleoprotein</keyword>
<keyword id="KW-0689">Ribosomal protein</keyword>
<keyword id="KW-0694">RNA-binding</keyword>
<keyword id="KW-0699">rRNA-binding</keyword>
<gene>
    <name evidence="1" type="primary">rplU</name>
    <name type="ordered locus">SP_1105</name>
</gene>
<reference key="1">
    <citation type="journal article" date="2001" name="Science">
        <title>Complete genome sequence of a virulent isolate of Streptococcus pneumoniae.</title>
        <authorList>
            <person name="Tettelin H."/>
            <person name="Nelson K.E."/>
            <person name="Paulsen I.T."/>
            <person name="Eisen J.A."/>
            <person name="Read T.D."/>
            <person name="Peterson S.N."/>
            <person name="Heidelberg J.F."/>
            <person name="DeBoy R.T."/>
            <person name="Haft D.H."/>
            <person name="Dodson R.J."/>
            <person name="Durkin A.S."/>
            <person name="Gwinn M.L."/>
            <person name="Kolonay J.F."/>
            <person name="Nelson W.C."/>
            <person name="Peterson J.D."/>
            <person name="Umayam L.A."/>
            <person name="White O."/>
            <person name="Salzberg S.L."/>
            <person name="Lewis M.R."/>
            <person name="Radune D."/>
            <person name="Holtzapple E.K."/>
            <person name="Khouri H.M."/>
            <person name="Wolf A.M."/>
            <person name="Utterback T.R."/>
            <person name="Hansen C.L."/>
            <person name="McDonald L.A."/>
            <person name="Feldblyum T.V."/>
            <person name="Angiuoli S.V."/>
            <person name="Dickinson T."/>
            <person name="Hickey E.K."/>
            <person name="Holt I.E."/>
            <person name="Loftus B.J."/>
            <person name="Yang F."/>
            <person name="Smith H.O."/>
            <person name="Venter J.C."/>
            <person name="Dougherty B.A."/>
            <person name="Morrison D.A."/>
            <person name="Hollingshead S.K."/>
            <person name="Fraser C.M."/>
        </authorList>
    </citation>
    <scope>NUCLEOTIDE SEQUENCE [LARGE SCALE GENOMIC DNA]</scope>
    <source>
        <strain>ATCC BAA-334 / TIGR4</strain>
    </source>
</reference>
<name>RL21_STRPN</name>
<dbReference type="EMBL" id="AE005672">
    <property type="protein sequence ID" value="AAK75216.1"/>
    <property type="molecule type" value="Genomic_DNA"/>
</dbReference>
<dbReference type="PIR" id="D97998">
    <property type="entry name" value="D97998"/>
</dbReference>
<dbReference type="PIR" id="G95127">
    <property type="entry name" value="G95127"/>
</dbReference>
<dbReference type="RefSeq" id="WP_000109141.1">
    <property type="nucleotide sequence ID" value="NZ_CP155539.1"/>
</dbReference>
<dbReference type="SMR" id="Q97QU4"/>
<dbReference type="PaxDb" id="170187-SP_1105"/>
<dbReference type="EnsemblBacteria" id="AAK75216">
    <property type="protein sequence ID" value="AAK75216"/>
    <property type="gene ID" value="SP_1105"/>
</dbReference>
<dbReference type="GeneID" id="93739805"/>
<dbReference type="KEGG" id="spn:SP_1105"/>
<dbReference type="eggNOG" id="COG0261">
    <property type="taxonomic scope" value="Bacteria"/>
</dbReference>
<dbReference type="PhylomeDB" id="Q97QU4"/>
<dbReference type="BioCyc" id="SPNE170187:G1FZB-1132-MONOMER"/>
<dbReference type="Proteomes" id="UP000000585">
    <property type="component" value="Chromosome"/>
</dbReference>
<dbReference type="GO" id="GO:0005737">
    <property type="term" value="C:cytoplasm"/>
    <property type="evidence" value="ECO:0007669"/>
    <property type="project" value="UniProtKB-ARBA"/>
</dbReference>
<dbReference type="GO" id="GO:1990904">
    <property type="term" value="C:ribonucleoprotein complex"/>
    <property type="evidence" value="ECO:0007669"/>
    <property type="project" value="UniProtKB-KW"/>
</dbReference>
<dbReference type="GO" id="GO:0005840">
    <property type="term" value="C:ribosome"/>
    <property type="evidence" value="ECO:0007669"/>
    <property type="project" value="UniProtKB-KW"/>
</dbReference>
<dbReference type="GO" id="GO:0019843">
    <property type="term" value="F:rRNA binding"/>
    <property type="evidence" value="ECO:0007669"/>
    <property type="project" value="UniProtKB-UniRule"/>
</dbReference>
<dbReference type="GO" id="GO:0003735">
    <property type="term" value="F:structural constituent of ribosome"/>
    <property type="evidence" value="ECO:0007669"/>
    <property type="project" value="InterPro"/>
</dbReference>
<dbReference type="GO" id="GO:0006412">
    <property type="term" value="P:translation"/>
    <property type="evidence" value="ECO:0007669"/>
    <property type="project" value="UniProtKB-UniRule"/>
</dbReference>
<dbReference type="HAMAP" id="MF_01363">
    <property type="entry name" value="Ribosomal_bL21"/>
    <property type="match status" value="1"/>
</dbReference>
<dbReference type="InterPro" id="IPR028909">
    <property type="entry name" value="bL21-like"/>
</dbReference>
<dbReference type="InterPro" id="IPR036164">
    <property type="entry name" value="bL21-like_sf"/>
</dbReference>
<dbReference type="InterPro" id="IPR001787">
    <property type="entry name" value="Ribosomal_bL21"/>
</dbReference>
<dbReference type="InterPro" id="IPR018258">
    <property type="entry name" value="Ribosomal_bL21_CS"/>
</dbReference>
<dbReference type="NCBIfam" id="TIGR00061">
    <property type="entry name" value="L21"/>
    <property type="match status" value="1"/>
</dbReference>
<dbReference type="PANTHER" id="PTHR21349">
    <property type="entry name" value="50S RIBOSOMAL PROTEIN L21"/>
    <property type="match status" value="1"/>
</dbReference>
<dbReference type="PANTHER" id="PTHR21349:SF0">
    <property type="entry name" value="LARGE RIBOSOMAL SUBUNIT PROTEIN BL21M"/>
    <property type="match status" value="1"/>
</dbReference>
<dbReference type="Pfam" id="PF00829">
    <property type="entry name" value="Ribosomal_L21p"/>
    <property type="match status" value="1"/>
</dbReference>
<dbReference type="SUPFAM" id="SSF141091">
    <property type="entry name" value="L21p-like"/>
    <property type="match status" value="1"/>
</dbReference>
<dbReference type="PROSITE" id="PS01169">
    <property type="entry name" value="RIBOSOMAL_L21"/>
    <property type="match status" value="1"/>
</dbReference>
<organism>
    <name type="scientific">Streptococcus pneumoniae serotype 4 (strain ATCC BAA-334 / TIGR4)</name>
    <dbReference type="NCBI Taxonomy" id="170187"/>
    <lineage>
        <taxon>Bacteria</taxon>
        <taxon>Bacillati</taxon>
        <taxon>Bacillota</taxon>
        <taxon>Bacilli</taxon>
        <taxon>Lactobacillales</taxon>
        <taxon>Streptococcaceae</taxon>
        <taxon>Streptococcus</taxon>
    </lineage>
</organism>
<comment type="function">
    <text evidence="1">This protein binds to 23S rRNA in the presence of protein L20.</text>
</comment>
<comment type="subunit">
    <text evidence="1">Part of the 50S ribosomal subunit. Contacts protein L20.</text>
</comment>
<comment type="similarity">
    <text evidence="1">Belongs to the bacterial ribosomal protein bL21 family.</text>
</comment>